<evidence type="ECO:0000250" key="1"/>
<evidence type="ECO:0000250" key="2">
    <source>
        <dbReference type="UniProtKB" id="O00327"/>
    </source>
</evidence>
<evidence type="ECO:0000250" key="3">
    <source>
        <dbReference type="UniProtKB" id="Q9WTL8"/>
    </source>
</evidence>
<evidence type="ECO:0000255" key="4">
    <source>
        <dbReference type="PROSITE-ProRule" id="PRU00140"/>
    </source>
</evidence>
<evidence type="ECO:0000255" key="5">
    <source>
        <dbReference type="PROSITE-ProRule" id="PRU00981"/>
    </source>
</evidence>
<evidence type="ECO:0000256" key="6">
    <source>
        <dbReference type="SAM" id="MobiDB-lite"/>
    </source>
</evidence>
<evidence type="ECO:0000269" key="7">
    <source>
    </source>
</evidence>
<evidence type="ECO:0000269" key="8">
    <source>
    </source>
</evidence>
<evidence type="ECO:0000269" key="9">
    <source>
    </source>
</evidence>
<organism>
    <name type="scientific">Gallus gallus</name>
    <name type="common">Chicken</name>
    <dbReference type="NCBI Taxonomy" id="9031"/>
    <lineage>
        <taxon>Eukaryota</taxon>
        <taxon>Metazoa</taxon>
        <taxon>Chordata</taxon>
        <taxon>Craniata</taxon>
        <taxon>Vertebrata</taxon>
        <taxon>Euteleostomi</taxon>
        <taxon>Archelosauria</taxon>
        <taxon>Archosauria</taxon>
        <taxon>Dinosauria</taxon>
        <taxon>Saurischia</taxon>
        <taxon>Theropoda</taxon>
        <taxon>Coelurosauria</taxon>
        <taxon>Aves</taxon>
        <taxon>Neognathae</taxon>
        <taxon>Galloanserae</taxon>
        <taxon>Galliformes</taxon>
        <taxon>Phasianidae</taxon>
        <taxon>Phasianinae</taxon>
        <taxon>Gallus</taxon>
    </lineage>
</organism>
<keyword id="KW-0007">Acetylation</keyword>
<keyword id="KW-0010">Activator</keyword>
<keyword id="KW-0090">Biological rhythms</keyword>
<keyword id="KW-0963">Cytoplasm</keyword>
<keyword id="KW-0238">DNA-binding</keyword>
<keyword id="KW-1017">Isopeptide bond</keyword>
<keyword id="KW-0539">Nucleus</keyword>
<keyword id="KW-0597">Phosphoprotein</keyword>
<keyword id="KW-1185">Reference proteome</keyword>
<keyword id="KW-0677">Repeat</keyword>
<keyword id="KW-0804">Transcription</keyword>
<keyword id="KW-0805">Transcription regulation</keyword>
<keyword id="KW-0832">Ubl conjugation</keyword>
<sequence length="633" mass="69437">MADQRMDISSTISDFMSPDPADLISSSLSTSGVDCNRKRKGSSTDYQLDGFPFEEGMDTDKDDQHGRLDYADQQGRIKNAREAHSQIEKRRRDKMNSFIDELASLVPTCNAMSRKLDKLTVLRMAVQHMKTLRGATNPYTEANYKPAFLSDDELKHLILRAADGFLFVVGCDRGKILFVSESVFKILNYSQNDLIGQSLFDYLHPKDIAKVKEQLSSSDTAPRERLIDAKTGLPVKTDITPGPSRLCSGARRSFFCRMKCNRPSVKVEDKDFPSTCSKKKADRKSFCTIHSTGYLKSWPPTKMGLDEDNEPDNEGCNLSCLVAIGRLHPHVVPQPVNGEIRVKPTEYVSRHAIDGKFVFVDQRATAILAYLPQELLGTSCYEYFHQDDIGHLAECHRQVLQTREKITTNCYKFKIKDGSFITLRSRWFSFMNPWTKEVEYIVSTNTVVSTSVLDSGDAAFPQLAASPHSMDSVLQAGEGGPKRSHPTVPGIPGGTRAGAGKIGRMIAEEIMEIHRIRGSSPSSCGSSPLNITSTPPPDTSSPGSKKILNGGTPDISSAGLLSGQIQDSSGYPYSDNSSILGENSHIGIDMIDNDQGSSSPSNDEAAMAVIMSLLEADAGLGGPVDFSDLPWPL</sequence>
<proteinExistence type="evidence at protein level"/>
<protein>
    <recommendedName>
        <fullName>Basic helix-loop-helix ARNT-like protein 1</fullName>
    </recommendedName>
    <alternativeName>
        <fullName>Aryl hydrocarbon receptor nuclear translocator-like protein 1</fullName>
    </alternativeName>
    <alternativeName>
        <fullName>BMAL1b'</fullName>
    </alternativeName>
    <alternativeName>
        <fullName>Brain and muscle ARNT-like 1</fullName>
        <shortName>cBMAL1</shortName>
    </alternativeName>
</protein>
<name>BMAL1_CHICK</name>
<feature type="chain" id="PRO_0000262645" description="Basic helix-loop-helix ARNT-like protein 1">
    <location>
        <begin position="1"/>
        <end position="633"/>
    </location>
</feature>
<feature type="domain" description="bHLH" evidence="5">
    <location>
        <begin position="79"/>
        <end position="132"/>
    </location>
</feature>
<feature type="domain" description="PAS 1" evidence="4">
    <location>
        <begin position="150"/>
        <end position="222"/>
    </location>
</feature>
<feature type="domain" description="PAS 2" evidence="4">
    <location>
        <begin position="333"/>
        <end position="403"/>
    </location>
</feature>
<feature type="domain" description="PAC">
    <location>
        <begin position="408"/>
        <end position="451"/>
    </location>
</feature>
<feature type="region of interest" description="Disordered" evidence="6">
    <location>
        <begin position="1"/>
        <end position="65"/>
    </location>
</feature>
<feature type="region of interest" description="Disordered" evidence="6">
    <location>
        <begin position="469"/>
        <end position="499"/>
    </location>
</feature>
<feature type="region of interest" description="Disordered" evidence="6">
    <location>
        <begin position="518"/>
        <end position="578"/>
    </location>
</feature>
<feature type="short sequence motif" description="Nuclear localization signal" evidence="3">
    <location>
        <begin position="36"/>
        <end position="41"/>
    </location>
</feature>
<feature type="short sequence motif" description="Nuclear export signal 1" evidence="3">
    <location>
        <begin position="149"/>
        <end position="159"/>
    </location>
</feature>
<feature type="short sequence motif" description="Nuclear export signal 2" evidence="3">
    <location>
        <begin position="368"/>
        <end position="376"/>
    </location>
</feature>
<feature type="compositionally biased region" description="Polar residues" evidence="6">
    <location>
        <begin position="24"/>
        <end position="33"/>
    </location>
</feature>
<feature type="compositionally biased region" description="Low complexity" evidence="6">
    <location>
        <begin position="518"/>
        <end position="528"/>
    </location>
</feature>
<feature type="compositionally biased region" description="Polar residues" evidence="6">
    <location>
        <begin position="563"/>
        <end position="578"/>
    </location>
</feature>
<feature type="site" description="Interaction with E-box DNA" evidence="2">
    <location>
        <position position="84"/>
    </location>
</feature>
<feature type="site" description="Interaction with E-box DNA" evidence="2">
    <location>
        <position position="87"/>
    </location>
</feature>
<feature type="site" description="Interaction with E-box DNA" evidence="2">
    <location>
        <position position="88"/>
    </location>
</feature>
<feature type="site" description="Interaction with E-box DNA" evidence="2">
    <location>
        <position position="92"/>
    </location>
</feature>
<feature type="site" description="Important for interaction with CLOCK" evidence="2">
    <location>
        <position position="132"/>
    </location>
</feature>
<feature type="modified residue" description="Phosphoserine; by GSK3-beta" evidence="3">
    <location>
        <position position="17"/>
    </location>
</feature>
<feature type="modified residue" description="Phosphoserine" evidence="2">
    <location>
        <position position="85"/>
    </location>
</feature>
<feature type="modified residue" description="Phosphoserine; by CK2" evidence="3">
    <location>
        <position position="97"/>
    </location>
</feature>
<feature type="modified residue" description="N6-acetyllysine" evidence="3">
    <location>
        <position position="545"/>
    </location>
</feature>
<feature type="cross-link" description="Glycyl lysine isopeptide (Lys-Gly) (interchain with G-Cter in SUMO2 and SUMO3)" evidence="3">
    <location>
        <position position="259"/>
    </location>
</feature>
<feature type="cross-link" description="Glycyl lysine isopeptide (Lys-Gly) (interchain with G-Cter in SUMO)" evidence="3">
    <location>
        <position position="266"/>
    </location>
</feature>
<reference key="1">
    <citation type="journal article" date="2000" name="J. Biol. Chem.">
        <title>Characterization of the chicken serotonin N-acetyltransferase gene. Activation via clock gene heterodimer/E box interaction.</title>
        <authorList>
            <person name="Chong N.W."/>
            <person name="Bernard M."/>
            <person name="Klein D.C."/>
        </authorList>
    </citation>
    <scope>NUCLEOTIDE SEQUENCE [MRNA]</scope>
    <scope>FUNCTION</scope>
    <scope>INTERACTION WITH CLOCK AND NPAS2</scope>
    <scope>TISSUE SPECIFICITY</scope>
    <scope>INDUCTION</scope>
    <source>
        <tissue>Pineal gland</tissue>
    </source>
</reference>
<reference key="2">
    <citation type="journal article" date="2001" name="Genes Cells">
        <title>Chicken pineal clock genes: implication of BMAL2 as a bidirectional regulator in circadian clock oscillation.</title>
        <authorList>
            <person name="Okano T."/>
            <person name="Yamamoto K."/>
            <person name="Okano K."/>
            <person name="Hirota T."/>
            <person name="Kasahara T."/>
            <person name="Sasaki M."/>
            <person name="Takanaka Y."/>
            <person name="Fukada Y."/>
        </authorList>
    </citation>
    <scope>NUCLEOTIDE SEQUENCE [MRNA]</scope>
    <scope>INDUCTION</scope>
    <source>
        <tissue>Pineal gland</tissue>
    </source>
</reference>
<reference key="3">
    <citation type="journal article" date="2010" name="J. Neurochem.">
        <title>CLOCK and NPAS2 have overlapping roles in the circadian oscillation of arylalkylamine N-acetyltransferase mRNA in chicken cone photoreceptors.</title>
        <authorList>
            <person name="Haque R."/>
            <person name="Ali F.G."/>
            <person name="Biscoglia R."/>
            <person name="Abey J."/>
            <person name="Weller J."/>
            <person name="Klein D."/>
            <person name="Iuvone P.M."/>
        </authorList>
    </citation>
    <scope>INDUCTION</scope>
</reference>
<accession>Q9I8T7</accession>
<dbReference type="EMBL" id="AF205219">
    <property type="protein sequence ID" value="AAF91179.1"/>
    <property type="molecule type" value="mRNA"/>
</dbReference>
<dbReference type="EMBL" id="AF246957">
    <property type="protein sequence ID" value="AAL98706.1"/>
    <property type="molecule type" value="mRNA"/>
</dbReference>
<dbReference type="RefSeq" id="NP_001001463.1">
    <property type="nucleotide sequence ID" value="NM_001001463.2"/>
</dbReference>
<dbReference type="RefSeq" id="XP_015141816.1">
    <property type="nucleotide sequence ID" value="XM_015286330.1"/>
</dbReference>
<dbReference type="RefSeq" id="XP_015141817.1">
    <property type="nucleotide sequence ID" value="XM_015286331.1"/>
</dbReference>
<dbReference type="RefSeq" id="XP_015141819.1">
    <property type="nucleotide sequence ID" value="XM_015286333.1"/>
</dbReference>
<dbReference type="SMR" id="Q9I8T7"/>
<dbReference type="FunCoup" id="Q9I8T7">
    <property type="interactions" value="171"/>
</dbReference>
<dbReference type="STRING" id="9031.ENSGALP00000008620"/>
<dbReference type="iPTMnet" id="Q9I8T7"/>
<dbReference type="PaxDb" id="9031-ENSGALP00000008620"/>
<dbReference type="Ensembl" id="ENSGALT00010052808.1">
    <property type="protein sequence ID" value="ENSGALP00010031714.1"/>
    <property type="gene ID" value="ENSGALG00010021726.1"/>
</dbReference>
<dbReference type="GeneID" id="374115"/>
<dbReference type="KEGG" id="gga:374115"/>
<dbReference type="CTD" id="476860"/>
<dbReference type="VEuPathDB" id="HostDB:geneid_374115"/>
<dbReference type="eggNOG" id="KOG3561">
    <property type="taxonomic scope" value="Eukaryota"/>
</dbReference>
<dbReference type="GeneTree" id="ENSGT00940000157523"/>
<dbReference type="HOGENOM" id="CLU_011864_2_2_1"/>
<dbReference type="InParanoid" id="Q9I8T7"/>
<dbReference type="OrthoDB" id="71302at2759"/>
<dbReference type="PhylomeDB" id="Q9I8T7"/>
<dbReference type="TreeFam" id="TF319983"/>
<dbReference type="PRO" id="PR:Q9I8T7"/>
<dbReference type="Proteomes" id="UP000000539">
    <property type="component" value="Chromosome 5"/>
</dbReference>
<dbReference type="Bgee" id="ENSGALG00000005378">
    <property type="expression patterns" value="Expressed in spermatocyte and 12 other cell types or tissues"/>
</dbReference>
<dbReference type="GO" id="GO:0034751">
    <property type="term" value="C:aryl hydrocarbon receptor complex"/>
    <property type="evidence" value="ECO:0000318"/>
    <property type="project" value="GO_Central"/>
</dbReference>
<dbReference type="GO" id="GO:0005737">
    <property type="term" value="C:cytoplasm"/>
    <property type="evidence" value="ECO:0007669"/>
    <property type="project" value="UniProtKB-SubCell"/>
</dbReference>
<dbReference type="GO" id="GO:0005634">
    <property type="term" value="C:nucleus"/>
    <property type="evidence" value="ECO:0000318"/>
    <property type="project" value="GO_Central"/>
</dbReference>
<dbReference type="GO" id="GO:0016605">
    <property type="term" value="C:PML body"/>
    <property type="evidence" value="ECO:0007669"/>
    <property type="project" value="UniProtKB-SubCell"/>
</dbReference>
<dbReference type="GO" id="GO:0005667">
    <property type="term" value="C:transcription regulator complex"/>
    <property type="evidence" value="ECO:0007669"/>
    <property type="project" value="InterPro"/>
</dbReference>
<dbReference type="GO" id="GO:0003677">
    <property type="term" value="F:DNA binding"/>
    <property type="evidence" value="ECO:0000250"/>
    <property type="project" value="UniProtKB"/>
</dbReference>
<dbReference type="GO" id="GO:0000981">
    <property type="term" value="F:DNA-binding transcription factor activity, RNA polymerase II-specific"/>
    <property type="evidence" value="ECO:0000318"/>
    <property type="project" value="GO_Central"/>
</dbReference>
<dbReference type="GO" id="GO:0046983">
    <property type="term" value="F:protein dimerization activity"/>
    <property type="evidence" value="ECO:0007669"/>
    <property type="project" value="InterPro"/>
</dbReference>
<dbReference type="GO" id="GO:0000978">
    <property type="term" value="F:RNA polymerase II cis-regulatory region sequence-specific DNA binding"/>
    <property type="evidence" value="ECO:0000318"/>
    <property type="project" value="GO_Central"/>
</dbReference>
<dbReference type="GO" id="GO:0007623">
    <property type="term" value="P:circadian rhythm"/>
    <property type="evidence" value="ECO:0000314"/>
    <property type="project" value="UniProtKB"/>
</dbReference>
<dbReference type="GO" id="GO:0045893">
    <property type="term" value="P:positive regulation of DNA-templated transcription"/>
    <property type="evidence" value="ECO:0000250"/>
    <property type="project" value="UniProtKB"/>
</dbReference>
<dbReference type="GO" id="GO:1901985">
    <property type="term" value="P:positive regulation of protein acetylation"/>
    <property type="evidence" value="ECO:0000250"/>
    <property type="project" value="UniProtKB"/>
</dbReference>
<dbReference type="GO" id="GO:0006357">
    <property type="term" value="P:regulation of transcription by RNA polymerase II"/>
    <property type="evidence" value="ECO:0000318"/>
    <property type="project" value="GO_Central"/>
</dbReference>
<dbReference type="GO" id="GO:0051775">
    <property type="term" value="P:response to redox state"/>
    <property type="evidence" value="ECO:0000250"/>
    <property type="project" value="UniProtKB"/>
</dbReference>
<dbReference type="CDD" id="cd11438">
    <property type="entry name" value="bHLH-PAS_ARNTL_PASD3"/>
    <property type="match status" value="1"/>
</dbReference>
<dbReference type="CDD" id="cd00130">
    <property type="entry name" value="PAS"/>
    <property type="match status" value="2"/>
</dbReference>
<dbReference type="FunFam" id="4.10.280.10:FF:000018">
    <property type="entry name" value="Aryl hydrocarbon receptor nuclear translocator-like protein 1"/>
    <property type="match status" value="1"/>
</dbReference>
<dbReference type="FunFam" id="3.30.450.20:FF:000006">
    <property type="entry name" value="aryl hydrocarbon receptor nuclear translocator-like protein 1"/>
    <property type="match status" value="1"/>
</dbReference>
<dbReference type="FunFam" id="3.30.450.20:FF:000010">
    <property type="entry name" value="Aryl hydrocarbon receptor nuclear translocator-like, isoform CRA_b"/>
    <property type="match status" value="1"/>
</dbReference>
<dbReference type="Gene3D" id="4.10.280.10">
    <property type="entry name" value="Helix-loop-helix DNA-binding domain"/>
    <property type="match status" value="1"/>
</dbReference>
<dbReference type="Gene3D" id="3.30.450.20">
    <property type="entry name" value="PAS domain"/>
    <property type="match status" value="2"/>
</dbReference>
<dbReference type="InterPro" id="IPR011598">
    <property type="entry name" value="bHLH_dom"/>
</dbReference>
<dbReference type="InterPro" id="IPR050933">
    <property type="entry name" value="Circadian_TF"/>
</dbReference>
<dbReference type="InterPro" id="IPR036638">
    <property type="entry name" value="HLH_DNA-bd_sf"/>
</dbReference>
<dbReference type="InterPro" id="IPR001067">
    <property type="entry name" value="Nuc_translocat"/>
</dbReference>
<dbReference type="InterPro" id="IPR001610">
    <property type="entry name" value="PAC"/>
</dbReference>
<dbReference type="InterPro" id="IPR000014">
    <property type="entry name" value="PAS"/>
</dbReference>
<dbReference type="InterPro" id="IPR035965">
    <property type="entry name" value="PAS-like_dom_sf"/>
</dbReference>
<dbReference type="InterPro" id="IPR013767">
    <property type="entry name" value="PAS_fold"/>
</dbReference>
<dbReference type="NCBIfam" id="TIGR00229">
    <property type="entry name" value="sensory_box"/>
    <property type="match status" value="1"/>
</dbReference>
<dbReference type="PANTHER" id="PTHR23042">
    <property type="entry name" value="CIRCADIAN PROTEIN CLOCK/ARNT/BMAL/PAS"/>
    <property type="match status" value="1"/>
</dbReference>
<dbReference type="Pfam" id="PF00010">
    <property type="entry name" value="HLH"/>
    <property type="match status" value="1"/>
</dbReference>
<dbReference type="Pfam" id="PF00989">
    <property type="entry name" value="PAS"/>
    <property type="match status" value="1"/>
</dbReference>
<dbReference type="Pfam" id="PF14598">
    <property type="entry name" value="PAS_11"/>
    <property type="match status" value="1"/>
</dbReference>
<dbReference type="PRINTS" id="PR00785">
    <property type="entry name" value="NCTRNSLOCATR"/>
</dbReference>
<dbReference type="SMART" id="SM00353">
    <property type="entry name" value="HLH"/>
    <property type="match status" value="1"/>
</dbReference>
<dbReference type="SMART" id="SM00086">
    <property type="entry name" value="PAC"/>
    <property type="match status" value="1"/>
</dbReference>
<dbReference type="SMART" id="SM00091">
    <property type="entry name" value="PAS"/>
    <property type="match status" value="2"/>
</dbReference>
<dbReference type="SUPFAM" id="SSF47459">
    <property type="entry name" value="HLH, helix-loop-helix DNA-binding domain"/>
    <property type="match status" value="1"/>
</dbReference>
<dbReference type="SUPFAM" id="SSF55785">
    <property type="entry name" value="PYP-like sensor domain (PAS domain)"/>
    <property type="match status" value="2"/>
</dbReference>
<dbReference type="PROSITE" id="PS50888">
    <property type="entry name" value="BHLH"/>
    <property type="match status" value="1"/>
</dbReference>
<dbReference type="PROSITE" id="PS50112">
    <property type="entry name" value="PAS"/>
    <property type="match status" value="2"/>
</dbReference>
<comment type="function">
    <text evidence="2 3 7">Transcriptional activator which forms a core component of the circadian clock. The circadian clock, an internal time-keeping system, regulates various physiological processes through the generation of approximately 24 hour circadian rhythms in gene expression, which are translated into rhythms in metabolism and behavior. It is derived from the Latin roots 'circa' (about) and 'diem' (day) and acts as an important regulator of a wide array of physiological functions including metabolism, sleep, body temperature, blood pressure, endocrine, immune, cardiovascular, and renal function. Consists of two major components: the central clock, residing in the suprachiasmatic nucleus (SCN) of the brain, and the peripheral clocks that are present in nearly every tissue and organ system. Both the central and peripheral clocks can be reset by environmental cues, also known as Zeitgebers (German for 'timegivers'). The predominant Zeitgeber for the central clock is light, which is sensed by retina and signals directly to the SCN. The central clock entrains the peripheral clocks through neuronal and hormonal signals, body temperature and feeding-related cues, aligning all clocks with the external light/dark cycle. Circadian rhythms allow an organism to achieve temporal homeostasis with its environment at the molecular level by regulating gene expression to create a peak of protein expression once every 24 hours to control when a particular physiological process is most active with respect to the solar day. Transcription and translation of core clock components (CLOCK, NPAS2, BMAL1, BMAL2, PER1, PER2, PER3, CRY1 and CRY2) plays a critical role in rhythm generation, whereas delays imposed by post-translational modifications (PTMs) are important for determining the period (tau) of the rhythms (tau refers to the period of a rhythm and is the length, in time, of one complete cycle). A diurnal rhythm is synchronized with the day/night cycle, while the ultradian and infradian rhythms have a period shorter and longer than 24 hours, respectively. Disruptions in the circadian rhythms contribute to the pathology of cardiovascular diseases, cancer, metabolic syndromes and aging. A transcription/translation feedback loop (TTFL) forms the core of the molecular circadian clock mechanism. Transcription factors, CLOCK or NPAS2 and BMAL1 or BMAL2, form the positive limb of the feedback loop, act in the form of a heterodimer and activate the transcription of core clock genes and clock-controlled genes (involved in key metabolic processes), harboring E-box elements (5'-CACGTG-3') within their promoters. The core clock genes: PER1/2/3 and CRY1/2 which are transcriptional repressors form the negative limb of the feedback loop and interact with the CLOCK|NPAS2-BMAL1|BMAL2 heterodimer inhibiting its activity and thereby negatively regulating their own expression. This heterodimer also activates nuclear receptors NR1D1/2 and RORA/B/G, which form a second feedback loop and which activate and repress BMAL1 transcription, respectively (By similarity). The preferred binding motif for the CLOCK-BMAL1 heterodimer is 5'-CACGTGA-3', which contains a flanking adenine nucleotide at the 3-prime end of the canonical 6-nucleotide E-box sequence (By similarity). CLOCK specifically binds to the half-site 5'-CAC-3', while BMAL1 binds to the half-site 5'-GTGA-3'. Essential for the rhythmic interaction of CLOCK with ASS1 and plays a critical role in positively regulating CLOCK-mediated acetylation of ASS1 (By similarity). Plays a role in protecting against lethal sepsis by limiting the expression of immune checkpoint protein CD274 in macrophages in a PKM2-dependent manner (By similarity).</text>
</comment>
<comment type="subunit">
    <text evidence="3 7">Component of the circadian clock oscillator which includes the CRY1/2 proteins, CLOCK or NPAS2, BMAL1 or BMAL2, CSNK1D and/or CSNK1E, TIMELESS and the PER1/2/3 proteins (By similarity). Forms a heterodimer with CLOCK (PubMed:10931848). The CLOCK-BMAL1 heterodimer is required for E-box-dependent transactivation, for CLOCK nuclear translocation and degradation, and, for phosphorylation of both CLOCK and BMAL1 (By similarity). Interacts with PER1, PER2, CRY1 and CRY2 and this interaction requires a translocation to the nucleus (By similarity). Interaction of the CLOCK-BMAL1 heterodimer with PER or CRY inhibits transcription activation (By similarity). Interacts with NPAS2 (PubMed:10931848).</text>
</comment>
<comment type="subcellular location">
    <subcellularLocation>
        <location evidence="5">Nucleus</location>
    </subcellularLocation>
    <subcellularLocation>
        <location evidence="1">Cytoplasm</location>
    </subcellularLocation>
    <subcellularLocation>
        <location evidence="1">Nucleus</location>
        <location evidence="1">PML body</location>
    </subcellularLocation>
    <text evidence="1">Shuttles between the nucleus and the cytoplasm and this nucleocytoplasmic shuttling is essential for the nuclear accumulation of CLOCK, target gene transcription and the degradation of the CLOCK-BMAL1 heterodimer. The sumoylated form localizes in the PML body (By similarity).</text>
</comment>
<comment type="tissue specificity">
    <text evidence="7">Expressed in pineal gland and retina.</text>
</comment>
<comment type="induction">
    <text evidence="7 8 9">Exhibits circadian rhythm expression in the pineal gland. Maximum levels between ZT13 and ZT16 during light/dark cycle. Similar expression in constant darkness. Expression in the retinal photoreceptor cells oscillates in a circadian manner.</text>
</comment>
<comment type="PTM">
    <text evidence="3">Ubiquitinated, leading to its proteasomal degradation. Deubiquitinated by USP9X.</text>
</comment>
<comment type="PTM">
    <text evidence="3">O-glycosylated; contains O-GlcNAc. O-glycosylation by OGT prevents protein degradation by inhibiting ubiquitination. It also stabilizes the CLOCK-BMAL1 heterodimer thereby increasing CLOCK-BMAL1-mediated transcription of genes in the negative loop of the circadian clock such as PER1/2/3 and CRY1/2.</text>
</comment>
<comment type="PTM">
    <text evidence="3">Acetylated on Lys-545 by CLOCK during the repression phase of the circadian cycle. Acetylation facilitates recruitment of CRY1 protein and initiates the repression phase of the circadian cycle. Acetylated at Lys-545 by KAT5 during the activation phase of the cycle, leading to recruitment of the positive transcription elongation factor b (P-TEFb) and BRD4, followed by productive elongation of circadian transcripts. Deacetylated by SIRT1, which may result in decreased protein stability.</text>
</comment>
<comment type="PTM">
    <text evidence="2 3">Phosphorylated upon dimerization with CLOCK. Phosphorylation enhances the transcriptional activity, alters the subcellular localization and decreases the stability of the CLOCK-BMAL1 heterodimer by promoting its degradation. Phosphorylation shows circadian variations in the liver with a peak between CT10 to CT14. Phosphorylation at Ser-97 by CK2 is essential for its nuclear localization, its interaction with CLOCK and controls CLOCK nuclear entry. Dephosphorylation at Ser-85 is important for dimerization with CLOCK and transcriptional activity.</text>
</comment>
<comment type="PTM">
    <text evidence="3">Sumoylated on Lys-266 upon dimerization with CLOCK. Predominantly conjugated to poly-SUMO2/3 rather than SUMO1 and the level of these conjugates undergo rhythmic variation, peaking at CT9-CT12. Sumoylation localizes it exclusively to the PML body and promotes its ubiquitination in the PML body, ubiquitin-dependent proteasomal degradation and the transcriptional activity of the CLOCK-BMAL1 heterodimer.</text>
</comment>
<comment type="PTM">
    <text evidence="3">Undergoes lysosome-mediated degradation in a time-dependent manner in the liver.</text>
</comment>
<gene>
    <name type="primary">BMAL1</name>
    <name type="synonym">ARNTL</name>
</gene>